<proteinExistence type="inferred from homology"/>
<protein>
    <recommendedName>
        <fullName evidence="1">Small ribosomal subunit protein bS16</fullName>
    </recommendedName>
    <alternativeName>
        <fullName evidence="2">30S ribosomal protein S16</fullName>
    </alternativeName>
</protein>
<evidence type="ECO:0000255" key="1">
    <source>
        <dbReference type="HAMAP-Rule" id="MF_00385"/>
    </source>
</evidence>
<evidence type="ECO:0000305" key="2"/>
<feature type="chain" id="PRO_0000243781" description="Small ribosomal subunit protein bS16">
    <location>
        <begin position="1"/>
        <end position="86"/>
    </location>
</feature>
<organism>
    <name type="scientific">Bordetella avium (strain 197N)</name>
    <dbReference type="NCBI Taxonomy" id="360910"/>
    <lineage>
        <taxon>Bacteria</taxon>
        <taxon>Pseudomonadati</taxon>
        <taxon>Pseudomonadota</taxon>
        <taxon>Betaproteobacteria</taxon>
        <taxon>Burkholderiales</taxon>
        <taxon>Alcaligenaceae</taxon>
        <taxon>Bordetella</taxon>
    </lineage>
</organism>
<comment type="similarity">
    <text evidence="1">Belongs to the bacterial ribosomal protein bS16 family.</text>
</comment>
<sequence>MVVIRLARGGSKKRPFYNLVATDSRNRRDGRFVERVGFYNPVGSEGSENLRIALDRVKYWVDNGAQLSPAVERLVKEHSAKVSAAA</sequence>
<name>RS16_BORA1</name>
<gene>
    <name evidence="1" type="primary">rpsP</name>
    <name type="ordered locus">BAV2352</name>
</gene>
<accession>Q2KY79</accession>
<dbReference type="EMBL" id="AM167904">
    <property type="protein sequence ID" value="CAJ49962.1"/>
    <property type="molecule type" value="Genomic_DNA"/>
</dbReference>
<dbReference type="RefSeq" id="WP_012418013.1">
    <property type="nucleotide sequence ID" value="NC_010645.1"/>
</dbReference>
<dbReference type="SMR" id="Q2KY79"/>
<dbReference type="STRING" id="360910.BAV2352"/>
<dbReference type="GeneID" id="92934472"/>
<dbReference type="KEGG" id="bav:BAV2352"/>
<dbReference type="eggNOG" id="COG0228">
    <property type="taxonomic scope" value="Bacteria"/>
</dbReference>
<dbReference type="HOGENOM" id="CLU_100590_5_1_4"/>
<dbReference type="OrthoDB" id="9807878at2"/>
<dbReference type="Proteomes" id="UP000001977">
    <property type="component" value="Chromosome"/>
</dbReference>
<dbReference type="GO" id="GO:0005737">
    <property type="term" value="C:cytoplasm"/>
    <property type="evidence" value="ECO:0007669"/>
    <property type="project" value="UniProtKB-ARBA"/>
</dbReference>
<dbReference type="GO" id="GO:0015935">
    <property type="term" value="C:small ribosomal subunit"/>
    <property type="evidence" value="ECO:0007669"/>
    <property type="project" value="TreeGrafter"/>
</dbReference>
<dbReference type="GO" id="GO:0003735">
    <property type="term" value="F:structural constituent of ribosome"/>
    <property type="evidence" value="ECO:0007669"/>
    <property type="project" value="InterPro"/>
</dbReference>
<dbReference type="GO" id="GO:0006412">
    <property type="term" value="P:translation"/>
    <property type="evidence" value="ECO:0007669"/>
    <property type="project" value="UniProtKB-UniRule"/>
</dbReference>
<dbReference type="Gene3D" id="3.30.1320.10">
    <property type="match status" value="1"/>
</dbReference>
<dbReference type="HAMAP" id="MF_00385">
    <property type="entry name" value="Ribosomal_bS16"/>
    <property type="match status" value="1"/>
</dbReference>
<dbReference type="InterPro" id="IPR000307">
    <property type="entry name" value="Ribosomal_bS16"/>
</dbReference>
<dbReference type="InterPro" id="IPR023803">
    <property type="entry name" value="Ribosomal_bS16_dom_sf"/>
</dbReference>
<dbReference type="NCBIfam" id="TIGR00002">
    <property type="entry name" value="S16"/>
    <property type="match status" value="1"/>
</dbReference>
<dbReference type="PANTHER" id="PTHR12919">
    <property type="entry name" value="30S RIBOSOMAL PROTEIN S16"/>
    <property type="match status" value="1"/>
</dbReference>
<dbReference type="PANTHER" id="PTHR12919:SF20">
    <property type="entry name" value="SMALL RIBOSOMAL SUBUNIT PROTEIN BS16M"/>
    <property type="match status" value="1"/>
</dbReference>
<dbReference type="Pfam" id="PF00886">
    <property type="entry name" value="Ribosomal_S16"/>
    <property type="match status" value="1"/>
</dbReference>
<dbReference type="SUPFAM" id="SSF54565">
    <property type="entry name" value="Ribosomal protein S16"/>
    <property type="match status" value="1"/>
</dbReference>
<keyword id="KW-1185">Reference proteome</keyword>
<keyword id="KW-0687">Ribonucleoprotein</keyword>
<keyword id="KW-0689">Ribosomal protein</keyword>
<reference key="1">
    <citation type="journal article" date="2006" name="J. Bacteriol.">
        <title>Comparison of the genome sequence of the poultry pathogen Bordetella avium with those of B. bronchiseptica, B. pertussis, and B. parapertussis reveals extensive diversity in surface structures associated with host interaction.</title>
        <authorList>
            <person name="Sebaihia M."/>
            <person name="Preston A."/>
            <person name="Maskell D.J."/>
            <person name="Kuzmiak H."/>
            <person name="Connell T.D."/>
            <person name="King N.D."/>
            <person name="Orndorff P.E."/>
            <person name="Miyamoto D.M."/>
            <person name="Thomson N.R."/>
            <person name="Harris D."/>
            <person name="Goble A."/>
            <person name="Lord A."/>
            <person name="Murphy L."/>
            <person name="Quail M.A."/>
            <person name="Rutter S."/>
            <person name="Squares R."/>
            <person name="Squares S."/>
            <person name="Woodward J."/>
            <person name="Parkhill J."/>
            <person name="Temple L.M."/>
        </authorList>
    </citation>
    <scope>NUCLEOTIDE SEQUENCE [LARGE SCALE GENOMIC DNA]</scope>
    <source>
        <strain>197N</strain>
    </source>
</reference>